<feature type="chain" id="PRO_0000093912" description="RNA polymerase sigma factor RpoD">
    <location>
        <begin position="1"/>
        <end position="614"/>
    </location>
</feature>
<feature type="DNA-binding region" description="H-T-H motif" evidence="1">
    <location>
        <begin position="574"/>
        <end position="593"/>
    </location>
</feature>
<feature type="region of interest" description="Disordered" evidence="2">
    <location>
        <begin position="178"/>
        <end position="222"/>
    </location>
</feature>
<feature type="region of interest" description="Sigma-70 factor domain-2" evidence="1">
    <location>
        <begin position="380"/>
        <end position="450"/>
    </location>
</feature>
<feature type="region of interest" description="Sigma-70 factor domain-3" evidence="1">
    <location>
        <begin position="459"/>
        <end position="535"/>
    </location>
</feature>
<feature type="region of interest" description="Sigma-70 factor domain-4" evidence="1">
    <location>
        <begin position="548"/>
        <end position="601"/>
    </location>
</feature>
<feature type="short sequence motif" description="Interaction with polymerase core subunit RpoC">
    <location>
        <begin position="404"/>
        <end position="407"/>
    </location>
</feature>
<feature type="compositionally biased region" description="Basic and acidic residues" evidence="2">
    <location>
        <begin position="186"/>
        <end position="198"/>
    </location>
</feature>
<feature type="compositionally biased region" description="Acidic residues" evidence="2">
    <location>
        <begin position="199"/>
        <end position="208"/>
    </location>
</feature>
<feature type="compositionally biased region" description="Basic and acidic residues" evidence="2">
    <location>
        <begin position="209"/>
        <end position="222"/>
    </location>
</feature>
<organism>
    <name type="scientific">Shewanella violacea (strain JCM 10179 / CIP 106290 / LMG 19151 / DSS12)</name>
    <dbReference type="NCBI Taxonomy" id="637905"/>
    <lineage>
        <taxon>Bacteria</taxon>
        <taxon>Pseudomonadati</taxon>
        <taxon>Pseudomonadota</taxon>
        <taxon>Gammaproteobacteria</taxon>
        <taxon>Alteromonadales</taxon>
        <taxon>Shewanellaceae</taxon>
        <taxon>Shewanella</taxon>
    </lineage>
</organism>
<reference key="1">
    <citation type="journal article" date="2001" name="Biosci. Biotechnol. Biochem.">
        <title>Isolation of the rpoD gene encoding the principal sigma factor of the deep-sea piezophilic bacterium Shewanella violacea strain DSS12 and its overexpression in Escherichia coli.</title>
        <authorList>
            <person name="Nakasone K."/>
            <person name="Ikegami A."/>
            <person name="Kato C."/>
            <person name="Horikoshi K."/>
        </authorList>
    </citation>
    <scope>NUCLEOTIDE SEQUENCE [GENOMIC DNA]</scope>
</reference>
<reference key="2">
    <citation type="journal article" date="2010" name="Mol. Biosyst.">
        <title>Complete genome sequence and comparative analysis of Shewanella violacea, a psychrophilic and piezophilic bacterium from deep sea floor sediments.</title>
        <authorList>
            <person name="Aono E."/>
            <person name="Baba T."/>
            <person name="Ara T."/>
            <person name="Nishi T."/>
            <person name="Nakamichi T."/>
            <person name="Inamoto E."/>
            <person name="Toyonaga H."/>
            <person name="Hasegawa M."/>
            <person name="Takai Y."/>
            <person name="Okumura Y."/>
            <person name="Baba M."/>
            <person name="Tomita M."/>
            <person name="Kato C."/>
            <person name="Oshima T."/>
            <person name="Nakasone K."/>
            <person name="Mori H."/>
        </authorList>
    </citation>
    <scope>NUCLEOTIDE SEQUENCE [LARGE SCALE GENOMIC DNA]</scope>
    <source>
        <strain>JCM 10179 / CIP 106290 / LMG 19151 / DSS12</strain>
    </source>
</reference>
<protein>
    <recommendedName>
        <fullName evidence="1">RNA polymerase sigma factor RpoD</fullName>
    </recommendedName>
    <alternativeName>
        <fullName evidence="1">Sigma-70</fullName>
    </alternativeName>
</protein>
<dbReference type="EMBL" id="AB002098">
    <property type="protein sequence ID" value="BAA19475.1"/>
    <property type="molecule type" value="Genomic_DNA"/>
</dbReference>
<dbReference type="EMBL" id="AP011177">
    <property type="protein sequence ID" value="BAJ00849.1"/>
    <property type="molecule type" value="Genomic_DNA"/>
</dbReference>
<dbReference type="PIR" id="JC7652">
    <property type="entry name" value="JC7652"/>
</dbReference>
<dbReference type="RefSeq" id="WP_013050160.1">
    <property type="nucleotide sequence ID" value="NC_014012.1"/>
</dbReference>
<dbReference type="SMR" id="O24744"/>
<dbReference type="STRING" id="637905.SVI_0878"/>
<dbReference type="KEGG" id="svo:SVI_0878"/>
<dbReference type="eggNOG" id="COG0568">
    <property type="taxonomic scope" value="Bacteria"/>
</dbReference>
<dbReference type="HOGENOM" id="CLU_014793_7_0_6"/>
<dbReference type="Proteomes" id="UP000002350">
    <property type="component" value="Chromosome"/>
</dbReference>
<dbReference type="GO" id="GO:0005737">
    <property type="term" value="C:cytoplasm"/>
    <property type="evidence" value="ECO:0007669"/>
    <property type="project" value="UniProtKB-SubCell"/>
</dbReference>
<dbReference type="GO" id="GO:0003677">
    <property type="term" value="F:DNA binding"/>
    <property type="evidence" value="ECO:0007669"/>
    <property type="project" value="UniProtKB-UniRule"/>
</dbReference>
<dbReference type="GO" id="GO:0016987">
    <property type="term" value="F:sigma factor activity"/>
    <property type="evidence" value="ECO:0007669"/>
    <property type="project" value="UniProtKB-UniRule"/>
</dbReference>
<dbReference type="GO" id="GO:0006352">
    <property type="term" value="P:DNA-templated transcription initiation"/>
    <property type="evidence" value="ECO:0007669"/>
    <property type="project" value="UniProtKB-UniRule"/>
</dbReference>
<dbReference type="CDD" id="cd06171">
    <property type="entry name" value="Sigma70_r4"/>
    <property type="match status" value="1"/>
</dbReference>
<dbReference type="FunFam" id="1.10.220.120:FF:000001">
    <property type="entry name" value="RNA polymerase sigma factor RpoD"/>
    <property type="match status" value="1"/>
</dbReference>
<dbReference type="FunFam" id="1.10.601.10:FF:000002">
    <property type="entry name" value="RNA polymerase sigma factor RpoD"/>
    <property type="match status" value="1"/>
</dbReference>
<dbReference type="FunFam" id="1.10.10.10:FF:000002">
    <property type="entry name" value="RNA polymerase sigma factor SigA"/>
    <property type="match status" value="1"/>
</dbReference>
<dbReference type="FunFam" id="1.10.10.10:FF:000004">
    <property type="entry name" value="RNA polymerase sigma factor SigA"/>
    <property type="match status" value="1"/>
</dbReference>
<dbReference type="Gene3D" id="1.10.601.10">
    <property type="entry name" value="RNA Polymerase Primary Sigma Factor"/>
    <property type="match status" value="1"/>
</dbReference>
<dbReference type="Gene3D" id="1.10.220.120">
    <property type="entry name" value="Sigma-70 factor, region 1.1"/>
    <property type="match status" value="1"/>
</dbReference>
<dbReference type="Gene3D" id="1.10.10.10">
    <property type="entry name" value="Winged helix-like DNA-binding domain superfamily/Winged helix DNA-binding domain"/>
    <property type="match status" value="2"/>
</dbReference>
<dbReference type="HAMAP" id="MF_00963">
    <property type="entry name" value="Sigma70_RpoD_SigA"/>
    <property type="match status" value="1"/>
</dbReference>
<dbReference type="InterPro" id="IPR014284">
    <property type="entry name" value="RNA_pol_sigma-70_dom"/>
</dbReference>
<dbReference type="InterPro" id="IPR000943">
    <property type="entry name" value="RNA_pol_sigma70"/>
</dbReference>
<dbReference type="InterPro" id="IPR009042">
    <property type="entry name" value="RNA_pol_sigma70_r1_2"/>
</dbReference>
<dbReference type="InterPro" id="IPR007627">
    <property type="entry name" value="RNA_pol_sigma70_r2"/>
</dbReference>
<dbReference type="InterPro" id="IPR007624">
    <property type="entry name" value="RNA_pol_sigma70_r3"/>
</dbReference>
<dbReference type="InterPro" id="IPR007630">
    <property type="entry name" value="RNA_pol_sigma70_r4"/>
</dbReference>
<dbReference type="InterPro" id="IPR007631">
    <property type="entry name" value="RNA_pol_sigma_70_non-ess"/>
</dbReference>
<dbReference type="InterPro" id="IPR007127">
    <property type="entry name" value="RNA_pol_sigma_70_r1_1"/>
</dbReference>
<dbReference type="InterPro" id="IPR042189">
    <property type="entry name" value="RNA_pol_sigma_70_r1_1_sf"/>
</dbReference>
<dbReference type="InterPro" id="IPR013325">
    <property type="entry name" value="RNA_pol_sigma_r2"/>
</dbReference>
<dbReference type="InterPro" id="IPR013324">
    <property type="entry name" value="RNA_pol_sigma_r3/r4-like"/>
</dbReference>
<dbReference type="InterPro" id="IPR012760">
    <property type="entry name" value="RNA_pol_sigma_RpoD_C"/>
</dbReference>
<dbReference type="InterPro" id="IPR050239">
    <property type="entry name" value="Sigma-70_RNA_pol_init_factors"/>
</dbReference>
<dbReference type="InterPro" id="IPR028630">
    <property type="entry name" value="Sigma70_RpoD"/>
</dbReference>
<dbReference type="InterPro" id="IPR036388">
    <property type="entry name" value="WH-like_DNA-bd_sf"/>
</dbReference>
<dbReference type="NCBIfam" id="NF004208">
    <property type="entry name" value="PRK05658.1"/>
    <property type="match status" value="1"/>
</dbReference>
<dbReference type="NCBIfam" id="TIGR02393">
    <property type="entry name" value="RpoD_Cterm"/>
    <property type="match status" value="1"/>
</dbReference>
<dbReference type="NCBIfam" id="TIGR02937">
    <property type="entry name" value="sigma70-ECF"/>
    <property type="match status" value="1"/>
</dbReference>
<dbReference type="PANTHER" id="PTHR30603">
    <property type="entry name" value="RNA POLYMERASE SIGMA FACTOR RPO"/>
    <property type="match status" value="1"/>
</dbReference>
<dbReference type="PANTHER" id="PTHR30603:SF60">
    <property type="entry name" value="RNA POLYMERASE SIGMA FACTOR RPOD"/>
    <property type="match status" value="1"/>
</dbReference>
<dbReference type="Pfam" id="PF04546">
    <property type="entry name" value="Sigma70_ner"/>
    <property type="match status" value="1"/>
</dbReference>
<dbReference type="Pfam" id="PF03979">
    <property type="entry name" value="Sigma70_r1_1"/>
    <property type="match status" value="1"/>
</dbReference>
<dbReference type="Pfam" id="PF00140">
    <property type="entry name" value="Sigma70_r1_2"/>
    <property type="match status" value="1"/>
</dbReference>
<dbReference type="Pfam" id="PF04542">
    <property type="entry name" value="Sigma70_r2"/>
    <property type="match status" value="1"/>
</dbReference>
<dbReference type="Pfam" id="PF04539">
    <property type="entry name" value="Sigma70_r3"/>
    <property type="match status" value="1"/>
</dbReference>
<dbReference type="Pfam" id="PF04545">
    <property type="entry name" value="Sigma70_r4"/>
    <property type="match status" value="1"/>
</dbReference>
<dbReference type="PRINTS" id="PR00046">
    <property type="entry name" value="SIGMA70FCT"/>
</dbReference>
<dbReference type="SUPFAM" id="SSF88946">
    <property type="entry name" value="Sigma2 domain of RNA polymerase sigma factors"/>
    <property type="match status" value="1"/>
</dbReference>
<dbReference type="SUPFAM" id="SSF88659">
    <property type="entry name" value="Sigma3 and sigma4 domains of RNA polymerase sigma factors"/>
    <property type="match status" value="2"/>
</dbReference>
<dbReference type="PROSITE" id="PS00715">
    <property type="entry name" value="SIGMA70_1"/>
    <property type="match status" value="1"/>
</dbReference>
<dbReference type="PROSITE" id="PS00716">
    <property type="entry name" value="SIGMA70_2"/>
    <property type="match status" value="1"/>
</dbReference>
<gene>
    <name evidence="1" type="primary">rpoD</name>
    <name type="ordered locus">SVI_0878</name>
</gene>
<comment type="function">
    <text evidence="1">Sigma factors are initiation factors that promote the attachment of RNA polymerase to specific initiation sites and are then released. This sigma factor is the primary sigma factor during exponential growth.</text>
</comment>
<comment type="subunit">
    <text evidence="1">Interacts transiently with the RNA polymerase catalytic core.</text>
</comment>
<comment type="subcellular location">
    <subcellularLocation>
        <location evidence="1">Cytoplasm</location>
    </subcellularLocation>
</comment>
<comment type="similarity">
    <text evidence="1">Belongs to the sigma-70 factor family. RpoD/SigA subfamily.</text>
</comment>
<evidence type="ECO:0000255" key="1">
    <source>
        <dbReference type="HAMAP-Rule" id="MF_00963"/>
    </source>
</evidence>
<evidence type="ECO:0000256" key="2">
    <source>
        <dbReference type="SAM" id="MobiDB-lite"/>
    </source>
</evidence>
<sequence length="614" mass="70031">MEHTPQSQLKLLLAKGKEQGYLTYAEVNDHLPADMVDADQIEDIVQMINDMGIRVYEQAPDADEIMMTEDSTDDDAAEEAAAALATVEAELGRTTDPVRMYMREMGTVELLTREGEIVIAKRIEEGIYTVQASVAEYPPAIASILDQFDRYEAEEVRLSDIISGFIDPNAADIAPTATHIGSDLSQSERDKDDSKDDSKDDDEDEEEEGPKGPDPEESKERFTQLREVHENTLKIIADKGRGHPEATVALFEIGELFKEFRLMPKQFDRLVKNMRATMDKVRVQERLIMKLCVEQAKMPKKNFVKGYTADESSIAWFDTELASKKPYAEGLKMIEPDVRRCRFKLDIIEKETGLAIASIKDINRRMSIGEAKARRAKKEMVEANLRLVISIAKKYTNRGLQFLDLIQEGNIGLMKAVDKFEYRRGYKFSTYATWWIRQAITRSIADQARTIRIPVHMIETINKLNRISRQMLQEMGREPTPEELAERMLMPEDKIRKVLKIAKEPISMETPIGDDEDSHLGDFIEDTTLELPLDSATGESLRNATHEVLAGLTAREAKVLRMRFGIDMNTDHTLEEVGKQFDVTRERIRQIEAKALRKLRHPSRSEILKSFLDE</sequence>
<name>RPOD_SHEVD</name>
<proteinExistence type="inferred from homology"/>
<keyword id="KW-0963">Cytoplasm</keyword>
<keyword id="KW-0238">DNA-binding</keyword>
<keyword id="KW-1185">Reference proteome</keyword>
<keyword id="KW-0731">Sigma factor</keyword>
<keyword id="KW-0804">Transcription</keyword>
<keyword id="KW-0805">Transcription regulation</keyword>
<accession>O24744</accession>
<accession>D4ZGQ0</accession>